<accession>Q5R5U3</accession>
<comment type="function">
    <text evidence="1">May be involved in transcriptional regulation.</text>
</comment>
<comment type="subcellular location">
    <subcellularLocation>
        <location evidence="1">Nucleus</location>
    </subcellularLocation>
</comment>
<comment type="similarity">
    <text evidence="4">Belongs to the krueppel C2H2-type zinc-finger protein family.</text>
</comment>
<protein>
    <recommendedName>
        <fullName>Zinc finger protein 271</fullName>
    </recommendedName>
</protein>
<proteinExistence type="evidence at transcript level"/>
<dbReference type="EMBL" id="CR860760">
    <property type="protein sequence ID" value="CAH92873.1"/>
    <property type="molecule type" value="mRNA"/>
</dbReference>
<dbReference type="RefSeq" id="NP_001126681.1">
    <property type="nucleotide sequence ID" value="NM_001133209.1"/>
</dbReference>
<dbReference type="SMR" id="Q5R5U3"/>
<dbReference type="GeneID" id="100173681"/>
<dbReference type="KEGG" id="pon:100173681"/>
<dbReference type="CTD" id="793549"/>
<dbReference type="eggNOG" id="KOG1721">
    <property type="taxonomic scope" value="Eukaryota"/>
</dbReference>
<dbReference type="InParanoid" id="Q5R5U3"/>
<dbReference type="OrthoDB" id="1095242at2759"/>
<dbReference type="Proteomes" id="UP000001595">
    <property type="component" value="Unplaced"/>
</dbReference>
<dbReference type="GO" id="GO:0005634">
    <property type="term" value="C:nucleus"/>
    <property type="evidence" value="ECO:0007669"/>
    <property type="project" value="UniProtKB-SubCell"/>
</dbReference>
<dbReference type="GO" id="GO:0003677">
    <property type="term" value="F:DNA binding"/>
    <property type="evidence" value="ECO:0007669"/>
    <property type="project" value="UniProtKB-KW"/>
</dbReference>
<dbReference type="GO" id="GO:0008270">
    <property type="term" value="F:zinc ion binding"/>
    <property type="evidence" value="ECO:0007669"/>
    <property type="project" value="UniProtKB-KW"/>
</dbReference>
<dbReference type="FunFam" id="3.30.160.60:FF:000002">
    <property type="entry name" value="Zinc finger protein 1 homolog"/>
    <property type="match status" value="1"/>
</dbReference>
<dbReference type="FunFam" id="3.30.160.60:FF:000824">
    <property type="entry name" value="Zinc finger protein 184"/>
    <property type="match status" value="1"/>
</dbReference>
<dbReference type="FunFam" id="3.30.160.60:FF:000348">
    <property type="entry name" value="zinc finger protein 260"/>
    <property type="match status" value="1"/>
</dbReference>
<dbReference type="FunFam" id="3.30.160.60:FF:002259">
    <property type="entry name" value="zinc finger protein 271"/>
    <property type="match status" value="2"/>
</dbReference>
<dbReference type="FunFam" id="3.30.160.60:FF:003133">
    <property type="entry name" value="zinc finger protein 271"/>
    <property type="match status" value="1"/>
</dbReference>
<dbReference type="FunFam" id="3.30.160.60:FF:002343">
    <property type="entry name" value="Zinc finger protein 33A"/>
    <property type="match status" value="8"/>
</dbReference>
<dbReference type="FunFam" id="3.30.160.60:FF:002134">
    <property type="entry name" value="Zinc finger protein 616"/>
    <property type="match status" value="1"/>
</dbReference>
<dbReference type="FunFam" id="3.30.160.60:FF:001697">
    <property type="entry name" value="zinc finger protein 623"/>
    <property type="match status" value="1"/>
</dbReference>
<dbReference type="FunFam" id="3.30.160.60:FF:000912">
    <property type="entry name" value="Zinc finger protein 660"/>
    <property type="match status" value="2"/>
</dbReference>
<dbReference type="FunFam" id="3.30.160.60:FF:000862">
    <property type="entry name" value="zinc finger protein 697"/>
    <property type="match status" value="1"/>
</dbReference>
<dbReference type="Gene3D" id="3.30.160.60">
    <property type="entry name" value="Classic Zinc Finger"/>
    <property type="match status" value="19"/>
</dbReference>
<dbReference type="InterPro" id="IPR050758">
    <property type="entry name" value="Znf_C2H2-type"/>
</dbReference>
<dbReference type="InterPro" id="IPR036236">
    <property type="entry name" value="Znf_C2H2_sf"/>
</dbReference>
<dbReference type="InterPro" id="IPR013087">
    <property type="entry name" value="Znf_C2H2_type"/>
</dbReference>
<dbReference type="PANTHER" id="PTHR23234:SF8">
    <property type="entry name" value="C2H2-TYPE DOMAIN-CONTAINING PROTEIN"/>
    <property type="match status" value="1"/>
</dbReference>
<dbReference type="PANTHER" id="PTHR23234">
    <property type="entry name" value="ZNF44 PROTEIN"/>
    <property type="match status" value="1"/>
</dbReference>
<dbReference type="Pfam" id="PF00096">
    <property type="entry name" value="zf-C2H2"/>
    <property type="match status" value="19"/>
</dbReference>
<dbReference type="SMART" id="SM00355">
    <property type="entry name" value="ZnF_C2H2"/>
    <property type="match status" value="20"/>
</dbReference>
<dbReference type="SUPFAM" id="SSF57667">
    <property type="entry name" value="beta-beta-alpha zinc fingers"/>
    <property type="match status" value="12"/>
</dbReference>
<dbReference type="PROSITE" id="PS00028">
    <property type="entry name" value="ZINC_FINGER_C2H2_1"/>
    <property type="match status" value="19"/>
</dbReference>
<dbReference type="PROSITE" id="PS50157">
    <property type="entry name" value="ZINC_FINGER_C2H2_2"/>
    <property type="match status" value="19"/>
</dbReference>
<organism>
    <name type="scientific">Pongo abelii</name>
    <name type="common">Sumatran orangutan</name>
    <name type="synonym">Pongo pygmaeus abelii</name>
    <dbReference type="NCBI Taxonomy" id="9601"/>
    <lineage>
        <taxon>Eukaryota</taxon>
        <taxon>Metazoa</taxon>
        <taxon>Chordata</taxon>
        <taxon>Craniata</taxon>
        <taxon>Vertebrata</taxon>
        <taxon>Euteleostomi</taxon>
        <taxon>Mammalia</taxon>
        <taxon>Eutheria</taxon>
        <taxon>Euarchontoglires</taxon>
        <taxon>Primates</taxon>
        <taxon>Haplorrhini</taxon>
        <taxon>Catarrhini</taxon>
        <taxon>Hominidae</taxon>
        <taxon>Pongo</taxon>
    </lineage>
</organism>
<sequence>MEIQFNYESQEHHLLSDGENKTKIGKPASEEGITAKIEPLTEESSSLRENVLQDSEGREFCEFGDKLNEKDQNVFKRRPHNCDEYGQSFVWNTGLFRHRKTHCEKPYECDKCGKAFSVSSALVLHQRIHTGEKPYSCNWCIKSFSRSSDLIKHQRVHTGEKPYKCDECGKAFSQSSDLIIHQRIHTGEKPYQCSHCSKSFSQRSDLVKHQRIHTGEKPYTCNQCNKHFSQSSDVIKHQRIHTGEKPYKCDVCAKAFSQSSDLILHQRIHTGEKPYPCNQCSKSFSQNSDLIKHRRIHTGEKPYKCNECGKAFNQSSVLILHQRIHTGEKPYPCDQCSKTFSRLSDLINHQRIHTGEKPYPCNQCNKMFSRRSDLVKHHRIHTGEKPYECDECGKTFSQSSNLILHQRIHTGEKPYPCSDCTKSFSRRSDLVKHQRIHTGEKPYACNQCDKSFSQSSDLTKHQRVHSGEKPYHCNSCEKAFSQSSDLILHQRIHTGEKPYLCTQCSKSFSQNSDLIKHQRIHTGEKPYKCSECRKAFSQCSALTLHQRIHTGEKPNPCNECGKSFSRHSDLINHQKIHTGEKPYKCDACGKAFSTCTDLIEHQKIHAGEKPYRCVQCSRSFSQLSELTIHEEVHCGEDSQNVMNVRKPLVYTSTLFSTRDTVPGKNLMNAVDY</sequence>
<reference key="1">
    <citation type="submission" date="2004-11" db="EMBL/GenBank/DDBJ databases">
        <authorList>
            <consortium name="The German cDNA consortium"/>
        </authorList>
    </citation>
    <scope>NUCLEOTIDE SEQUENCE [LARGE SCALE MRNA]</scope>
    <source>
        <tissue>Brain cortex</tissue>
    </source>
</reference>
<evidence type="ECO:0000250" key="1"/>
<evidence type="ECO:0000255" key="2">
    <source>
        <dbReference type="PROSITE-ProRule" id="PRU00042"/>
    </source>
</evidence>
<evidence type="ECO:0000256" key="3">
    <source>
        <dbReference type="SAM" id="MobiDB-lite"/>
    </source>
</evidence>
<evidence type="ECO:0000305" key="4"/>
<gene>
    <name type="primary">ZNF271</name>
</gene>
<feature type="chain" id="PRO_0000245768" description="Zinc finger protein 271">
    <location>
        <begin position="1"/>
        <end position="672"/>
    </location>
</feature>
<feature type="zinc finger region" description="C2H2-type 1; degenerate" evidence="2">
    <location>
        <begin position="80"/>
        <end position="102"/>
    </location>
</feature>
<feature type="zinc finger region" description="C2H2-type 2" evidence="2">
    <location>
        <begin position="107"/>
        <end position="129"/>
    </location>
</feature>
<feature type="zinc finger region" description="C2H2-type 3" evidence="2">
    <location>
        <begin position="135"/>
        <end position="157"/>
    </location>
</feature>
<feature type="zinc finger region" description="C2H2-type 4" evidence="2">
    <location>
        <begin position="163"/>
        <end position="185"/>
    </location>
</feature>
<feature type="zinc finger region" description="C2H2-type 5" evidence="2">
    <location>
        <begin position="191"/>
        <end position="213"/>
    </location>
</feature>
<feature type="zinc finger region" description="C2H2-type 6" evidence="2">
    <location>
        <begin position="219"/>
        <end position="241"/>
    </location>
</feature>
<feature type="zinc finger region" description="C2H2-type 7" evidence="2">
    <location>
        <begin position="247"/>
        <end position="269"/>
    </location>
</feature>
<feature type="zinc finger region" description="C2H2-type 8" evidence="2">
    <location>
        <begin position="275"/>
        <end position="297"/>
    </location>
</feature>
<feature type="zinc finger region" description="C2H2-type 9" evidence="2">
    <location>
        <begin position="303"/>
        <end position="325"/>
    </location>
</feature>
<feature type="zinc finger region" description="C2H2-type 10" evidence="2">
    <location>
        <begin position="331"/>
        <end position="353"/>
    </location>
</feature>
<feature type="zinc finger region" description="C2H2-type 11" evidence="2">
    <location>
        <begin position="359"/>
        <end position="381"/>
    </location>
</feature>
<feature type="zinc finger region" description="C2H2-type 12" evidence="2">
    <location>
        <begin position="387"/>
        <end position="409"/>
    </location>
</feature>
<feature type="zinc finger region" description="C2H2-type 13" evidence="2">
    <location>
        <begin position="415"/>
        <end position="437"/>
    </location>
</feature>
<feature type="zinc finger region" description="C2H2-type 14" evidence="2">
    <location>
        <begin position="443"/>
        <end position="465"/>
    </location>
</feature>
<feature type="zinc finger region" description="C2H2-type 15" evidence="2">
    <location>
        <begin position="471"/>
        <end position="493"/>
    </location>
</feature>
<feature type="zinc finger region" description="C2H2-type 16" evidence="2">
    <location>
        <begin position="499"/>
        <end position="521"/>
    </location>
</feature>
<feature type="zinc finger region" description="C2H2-type 17" evidence="2">
    <location>
        <begin position="527"/>
        <end position="549"/>
    </location>
</feature>
<feature type="zinc finger region" description="C2H2-type 18" evidence="2">
    <location>
        <begin position="555"/>
        <end position="577"/>
    </location>
</feature>
<feature type="zinc finger region" description="C2H2-type 19" evidence="2">
    <location>
        <begin position="583"/>
        <end position="605"/>
    </location>
</feature>
<feature type="zinc finger region" description="C2H2-type 20" evidence="2">
    <location>
        <begin position="611"/>
        <end position="633"/>
    </location>
</feature>
<feature type="region of interest" description="Disordered" evidence="3">
    <location>
        <begin position="1"/>
        <end position="29"/>
    </location>
</feature>
<feature type="compositionally biased region" description="Basic and acidic residues" evidence="3">
    <location>
        <begin position="9"/>
        <end position="22"/>
    </location>
</feature>
<keyword id="KW-0238">DNA-binding</keyword>
<keyword id="KW-0479">Metal-binding</keyword>
<keyword id="KW-0539">Nucleus</keyword>
<keyword id="KW-1185">Reference proteome</keyword>
<keyword id="KW-0677">Repeat</keyword>
<keyword id="KW-0804">Transcription</keyword>
<keyword id="KW-0805">Transcription regulation</keyword>
<keyword id="KW-0862">Zinc</keyword>
<keyword id="KW-0863">Zinc-finger</keyword>
<name>ZN271_PONAB</name>